<comment type="function">
    <text evidence="1">Binds to 23S rRNA. Forms part of two intersubunit bridges in the 70S ribosome.</text>
</comment>
<comment type="subunit">
    <text evidence="1">Part of the 50S ribosomal subunit. Forms a cluster with proteins L3 and L19. In the 70S ribosome, L14 and L19 interact and together make contacts with the 16S rRNA in bridges B5 and B8.</text>
</comment>
<comment type="similarity">
    <text evidence="1">Belongs to the universal ribosomal protein uL14 family.</text>
</comment>
<proteinExistence type="inferred from homology"/>
<accession>Q04MM6</accession>
<protein>
    <recommendedName>
        <fullName evidence="1">Large ribosomal subunit protein uL14</fullName>
    </recommendedName>
    <alternativeName>
        <fullName evidence="2">50S ribosomal protein L14</fullName>
    </alternativeName>
</protein>
<feature type="chain" id="PRO_1000055715" description="Large ribosomal subunit protein uL14">
    <location>
        <begin position="1"/>
        <end position="122"/>
    </location>
</feature>
<keyword id="KW-1185">Reference proteome</keyword>
<keyword id="KW-0687">Ribonucleoprotein</keyword>
<keyword id="KW-0689">Ribosomal protein</keyword>
<keyword id="KW-0694">RNA-binding</keyword>
<keyword id="KW-0699">rRNA-binding</keyword>
<reference key="1">
    <citation type="journal article" date="2007" name="J. Bacteriol.">
        <title>Genome sequence of Avery's virulent serotype 2 strain D39 of Streptococcus pneumoniae and comparison with that of unencapsulated laboratory strain R6.</title>
        <authorList>
            <person name="Lanie J.A."/>
            <person name="Ng W.-L."/>
            <person name="Kazmierczak K.M."/>
            <person name="Andrzejewski T.M."/>
            <person name="Davidsen T.M."/>
            <person name="Wayne K.J."/>
            <person name="Tettelin H."/>
            <person name="Glass J.I."/>
            <person name="Winkler M.E."/>
        </authorList>
    </citation>
    <scope>NUCLEOTIDE SEQUENCE [LARGE SCALE GENOMIC DNA]</scope>
    <source>
        <strain>D39 / NCTC 7466</strain>
    </source>
</reference>
<organism>
    <name type="scientific">Streptococcus pneumoniae serotype 2 (strain D39 / NCTC 7466)</name>
    <dbReference type="NCBI Taxonomy" id="373153"/>
    <lineage>
        <taxon>Bacteria</taxon>
        <taxon>Bacillati</taxon>
        <taxon>Bacillota</taxon>
        <taxon>Bacilli</taxon>
        <taxon>Lactobacillales</taxon>
        <taxon>Streptococcaceae</taxon>
        <taxon>Streptococcus</taxon>
    </lineage>
</organism>
<gene>
    <name evidence="1" type="primary">rplN</name>
    <name type="ordered locus">SPD_0203</name>
</gene>
<evidence type="ECO:0000255" key="1">
    <source>
        <dbReference type="HAMAP-Rule" id="MF_01367"/>
    </source>
</evidence>
<evidence type="ECO:0000305" key="2"/>
<sequence length="122" mass="13006">MIQTETRLKVADNSGAREILTIKVLGGSGRKFANIGDVIVASVKQATPGGAVKKGDVVKAVIVRTKSGARRADGSYIKFDENAAVIIREDKTPRGTRIFGPVARELREGGFMKIVSLAPEVL</sequence>
<dbReference type="EMBL" id="CP000410">
    <property type="protein sequence ID" value="ABJ55322.1"/>
    <property type="molecule type" value="Genomic_DNA"/>
</dbReference>
<dbReference type="RefSeq" id="WP_000616545.1">
    <property type="nucleotide sequence ID" value="NZ_JAMLJR010000002.1"/>
</dbReference>
<dbReference type="SMR" id="Q04MM6"/>
<dbReference type="PaxDb" id="373153-SPD_0203"/>
<dbReference type="GeneID" id="93738967"/>
<dbReference type="KEGG" id="spd:SPD_0203"/>
<dbReference type="eggNOG" id="COG0093">
    <property type="taxonomic scope" value="Bacteria"/>
</dbReference>
<dbReference type="HOGENOM" id="CLU_095071_2_1_9"/>
<dbReference type="BioCyc" id="SPNE373153:G1G6V-226-MONOMER"/>
<dbReference type="Proteomes" id="UP000001452">
    <property type="component" value="Chromosome"/>
</dbReference>
<dbReference type="GO" id="GO:0022625">
    <property type="term" value="C:cytosolic large ribosomal subunit"/>
    <property type="evidence" value="ECO:0007669"/>
    <property type="project" value="TreeGrafter"/>
</dbReference>
<dbReference type="GO" id="GO:0070180">
    <property type="term" value="F:large ribosomal subunit rRNA binding"/>
    <property type="evidence" value="ECO:0007669"/>
    <property type="project" value="TreeGrafter"/>
</dbReference>
<dbReference type="GO" id="GO:0003735">
    <property type="term" value="F:structural constituent of ribosome"/>
    <property type="evidence" value="ECO:0007669"/>
    <property type="project" value="InterPro"/>
</dbReference>
<dbReference type="GO" id="GO:0006412">
    <property type="term" value="P:translation"/>
    <property type="evidence" value="ECO:0007669"/>
    <property type="project" value="UniProtKB-UniRule"/>
</dbReference>
<dbReference type="CDD" id="cd00337">
    <property type="entry name" value="Ribosomal_uL14"/>
    <property type="match status" value="1"/>
</dbReference>
<dbReference type="FunFam" id="2.40.150.20:FF:000001">
    <property type="entry name" value="50S ribosomal protein L14"/>
    <property type="match status" value="1"/>
</dbReference>
<dbReference type="Gene3D" id="2.40.150.20">
    <property type="entry name" value="Ribosomal protein L14"/>
    <property type="match status" value="1"/>
</dbReference>
<dbReference type="HAMAP" id="MF_01367">
    <property type="entry name" value="Ribosomal_uL14"/>
    <property type="match status" value="1"/>
</dbReference>
<dbReference type="InterPro" id="IPR000218">
    <property type="entry name" value="Ribosomal_uL14"/>
</dbReference>
<dbReference type="InterPro" id="IPR005745">
    <property type="entry name" value="Ribosomal_uL14_bac-type"/>
</dbReference>
<dbReference type="InterPro" id="IPR019972">
    <property type="entry name" value="Ribosomal_uL14_CS"/>
</dbReference>
<dbReference type="InterPro" id="IPR036853">
    <property type="entry name" value="Ribosomal_uL14_sf"/>
</dbReference>
<dbReference type="NCBIfam" id="TIGR01067">
    <property type="entry name" value="rplN_bact"/>
    <property type="match status" value="1"/>
</dbReference>
<dbReference type="PANTHER" id="PTHR11761">
    <property type="entry name" value="50S/60S RIBOSOMAL PROTEIN L14/L23"/>
    <property type="match status" value="1"/>
</dbReference>
<dbReference type="PANTHER" id="PTHR11761:SF3">
    <property type="entry name" value="LARGE RIBOSOMAL SUBUNIT PROTEIN UL14M"/>
    <property type="match status" value="1"/>
</dbReference>
<dbReference type="Pfam" id="PF00238">
    <property type="entry name" value="Ribosomal_L14"/>
    <property type="match status" value="1"/>
</dbReference>
<dbReference type="SMART" id="SM01374">
    <property type="entry name" value="Ribosomal_L14"/>
    <property type="match status" value="1"/>
</dbReference>
<dbReference type="SUPFAM" id="SSF50193">
    <property type="entry name" value="Ribosomal protein L14"/>
    <property type="match status" value="1"/>
</dbReference>
<dbReference type="PROSITE" id="PS00049">
    <property type="entry name" value="RIBOSOMAL_L14"/>
    <property type="match status" value="1"/>
</dbReference>
<name>RL14_STRP2</name>